<name>PSBC_EUCGG</name>
<accession>Q49L02</accession>
<keyword id="KW-0007">Acetylation</keyword>
<keyword id="KW-0148">Chlorophyll</keyword>
<keyword id="KW-0150">Chloroplast</keyword>
<keyword id="KW-0157">Chromophore</keyword>
<keyword id="KW-0464">Manganese</keyword>
<keyword id="KW-0472">Membrane</keyword>
<keyword id="KW-0479">Metal-binding</keyword>
<keyword id="KW-0597">Phosphoprotein</keyword>
<keyword id="KW-0602">Photosynthesis</keyword>
<keyword id="KW-0604">Photosystem II</keyword>
<keyword id="KW-0934">Plastid</keyword>
<keyword id="KW-0793">Thylakoid</keyword>
<keyword id="KW-0812">Transmembrane</keyword>
<keyword id="KW-1133">Transmembrane helix</keyword>
<protein>
    <recommendedName>
        <fullName evidence="1">Photosystem II CP43 reaction center protein</fullName>
    </recommendedName>
    <alternativeName>
        <fullName evidence="1">PSII 43 kDa protein</fullName>
    </alternativeName>
    <alternativeName>
        <fullName evidence="1">Protein CP-43</fullName>
    </alternativeName>
</protein>
<comment type="function">
    <text evidence="1">One of the components of the core complex of photosystem II (PSII). It binds chlorophyll and helps catalyze the primary light-induced photochemical processes of PSII. PSII is a light-driven water:plastoquinone oxidoreductase, using light energy to abstract electrons from H(2)O, generating O(2) and a proton gradient subsequently used for ATP formation.</text>
</comment>
<comment type="cofactor">
    <text evidence="1">Binds multiple chlorophylls and provides some of the ligands for the Ca-4Mn-5O cluster of the oxygen-evolving complex. It may also provide a ligand for a Cl- that is required for oxygen evolution. PSII binds additional chlorophylls, carotenoids and specific lipids.</text>
</comment>
<comment type="subunit">
    <text evidence="1">PSII is composed of 1 copy each of membrane proteins PsbA, PsbB, PsbC, PsbD, PsbE, PsbF, PsbH, PsbI, PsbJ, PsbK, PsbL, PsbM, PsbT, PsbX, PsbY, PsbZ, Psb30/Ycf12, at least 3 peripheral proteins of the oxygen-evolving complex and a large number of cofactors. It forms dimeric complexes.</text>
</comment>
<comment type="subcellular location">
    <subcellularLocation>
        <location evidence="1">Plastid</location>
        <location evidence="1">Chloroplast thylakoid membrane</location>
        <topology evidence="1">Multi-pass membrane protein</topology>
    </subcellularLocation>
</comment>
<comment type="similarity">
    <text evidence="1">Belongs to the PsbB/PsbC family. PsbC subfamily.</text>
</comment>
<gene>
    <name evidence="1" type="primary">psbC</name>
</gene>
<sequence length="473" mass="51834">MKTLYSLRRFYPVETLFNGTLAXAGRDQETTGFAWWAGNARLINLSGKLLGAHVAHAGLIVFWAGAMNLFEVAHFVPEKPMYEQGLILLPHLATLGWGVGPGGEVIDTFPYFVSGVLHLISSAVLGFGGIYHALLGPETLEESFPFFGYVWKDRNKMTTILGIHLILLGIGAFLLVFKALYFGGVYDTWAPGGGDVRKITNLTLSPSVIFGYLLKSPFGGEGWIVSVDDLEDIIGGHVWLGSICILGGIWHILTKPFAWARRALVWSGEAYLSYSLAALSVFGFIACCFVWFNNTAYPSEFYGPTGPEASQAQAFTFLVRDQRLGANVGSAQGPTGLGKYLMRSPTGEVIFGGETMRFWDLRAPWLEPLRGPNGLDLSRLKKDIQPWQERRSAEYMTHAPLGSLNSVGGVATEINAVNYVSPRSWLATSHFVLGFFLFVGHLWHAGRARAAAAGFEKGIDRDFEPVLSMTPLN</sequence>
<geneLocation type="chloroplast"/>
<proteinExistence type="inferred from homology"/>
<dbReference type="EMBL" id="AY780259">
    <property type="protein sequence ID" value="AAX21025.1"/>
    <property type="molecule type" value="Genomic_DNA"/>
</dbReference>
<dbReference type="RefSeq" id="YP_636295.1">
    <property type="nucleotide sequence ID" value="NC_008115.1"/>
</dbReference>
<dbReference type="GeneID" id="4108371"/>
<dbReference type="GO" id="GO:0009535">
    <property type="term" value="C:chloroplast thylakoid membrane"/>
    <property type="evidence" value="ECO:0007669"/>
    <property type="project" value="UniProtKB-SubCell"/>
</dbReference>
<dbReference type="GO" id="GO:0009523">
    <property type="term" value="C:photosystem II"/>
    <property type="evidence" value="ECO:0007669"/>
    <property type="project" value="UniProtKB-KW"/>
</dbReference>
<dbReference type="GO" id="GO:0016168">
    <property type="term" value="F:chlorophyll binding"/>
    <property type="evidence" value="ECO:0007669"/>
    <property type="project" value="UniProtKB-UniRule"/>
</dbReference>
<dbReference type="GO" id="GO:0045156">
    <property type="term" value="F:electron transporter, transferring electrons within the cyclic electron transport pathway of photosynthesis activity"/>
    <property type="evidence" value="ECO:0007669"/>
    <property type="project" value="InterPro"/>
</dbReference>
<dbReference type="GO" id="GO:0046872">
    <property type="term" value="F:metal ion binding"/>
    <property type="evidence" value="ECO:0007669"/>
    <property type="project" value="UniProtKB-KW"/>
</dbReference>
<dbReference type="GO" id="GO:0009772">
    <property type="term" value="P:photosynthetic electron transport in photosystem II"/>
    <property type="evidence" value="ECO:0007669"/>
    <property type="project" value="InterPro"/>
</dbReference>
<dbReference type="FunFam" id="1.10.10.670:FF:000001">
    <property type="entry name" value="Photosystem II CP43 reaction center protein"/>
    <property type="match status" value="1"/>
</dbReference>
<dbReference type="Gene3D" id="1.10.10.670">
    <property type="entry name" value="photosystem ii from thermosynechococcus elongatus"/>
    <property type="match status" value="1"/>
</dbReference>
<dbReference type="HAMAP" id="MF_01496">
    <property type="entry name" value="PSII_PsbC_CP43"/>
    <property type="match status" value="1"/>
</dbReference>
<dbReference type="InterPro" id="IPR000932">
    <property type="entry name" value="PS_antenna-like"/>
</dbReference>
<dbReference type="InterPro" id="IPR036001">
    <property type="entry name" value="PS_II_antenna-like_sf"/>
</dbReference>
<dbReference type="InterPro" id="IPR005869">
    <property type="entry name" value="PSII_PsbC"/>
</dbReference>
<dbReference type="InterPro" id="IPR044900">
    <property type="entry name" value="PSII_PsbC_sf"/>
</dbReference>
<dbReference type="NCBIfam" id="TIGR01153">
    <property type="entry name" value="psbC"/>
    <property type="match status" value="1"/>
</dbReference>
<dbReference type="Pfam" id="PF00421">
    <property type="entry name" value="PSII"/>
    <property type="match status" value="1"/>
</dbReference>
<dbReference type="SUPFAM" id="SSF161077">
    <property type="entry name" value="Photosystem II antenna protein-like"/>
    <property type="match status" value="1"/>
</dbReference>
<reference key="1">
    <citation type="journal article" date="2005" name="DNA Res.">
        <title>Complete nucleotide sequence of the chloroplast genome from the Tasmanian blue gum, Eucalyptus globulus (Myrtaceae).</title>
        <authorList>
            <person name="Steane D.A."/>
        </authorList>
    </citation>
    <scope>NUCLEOTIDE SEQUENCE [LARGE SCALE GENOMIC DNA]</scope>
</reference>
<organism>
    <name type="scientific">Eucalyptus globulus subsp. globulus</name>
    <name type="common">Tasmanian blue gum</name>
    <dbReference type="NCBI Taxonomy" id="71271"/>
    <lineage>
        <taxon>Eukaryota</taxon>
        <taxon>Viridiplantae</taxon>
        <taxon>Streptophyta</taxon>
        <taxon>Embryophyta</taxon>
        <taxon>Tracheophyta</taxon>
        <taxon>Spermatophyta</taxon>
        <taxon>Magnoliopsida</taxon>
        <taxon>eudicotyledons</taxon>
        <taxon>Gunneridae</taxon>
        <taxon>Pentapetalae</taxon>
        <taxon>rosids</taxon>
        <taxon>malvids</taxon>
        <taxon>Myrtales</taxon>
        <taxon>Myrtaceae</taxon>
        <taxon>Myrtoideae</taxon>
        <taxon>Eucalypteae</taxon>
        <taxon>Eucalyptus</taxon>
    </lineage>
</organism>
<feature type="propeptide" id="PRO_0000431143" evidence="1">
    <location>
        <begin position="1"/>
        <end position="14"/>
    </location>
</feature>
<feature type="chain" id="PRO_0000361380" description="Photosystem II CP43 reaction center protein" evidence="1">
    <location>
        <begin position="15"/>
        <end position="473"/>
    </location>
</feature>
<feature type="transmembrane region" description="Helical" evidence="1">
    <location>
        <begin position="69"/>
        <end position="93"/>
    </location>
</feature>
<feature type="transmembrane region" description="Helical" evidence="1">
    <location>
        <begin position="134"/>
        <end position="155"/>
    </location>
</feature>
<feature type="transmembrane region" description="Helical" evidence="1">
    <location>
        <begin position="178"/>
        <end position="200"/>
    </location>
</feature>
<feature type="transmembrane region" description="Helical" evidence="1">
    <location>
        <begin position="255"/>
        <end position="275"/>
    </location>
</feature>
<feature type="transmembrane region" description="Helical" evidence="1">
    <location>
        <begin position="291"/>
        <end position="312"/>
    </location>
</feature>
<feature type="transmembrane region" description="Helical" evidence="1">
    <location>
        <begin position="447"/>
        <end position="471"/>
    </location>
</feature>
<feature type="binding site" evidence="1">
    <location>
        <position position="367"/>
    </location>
    <ligand>
        <name>[CaMn4O5] cluster</name>
        <dbReference type="ChEBI" id="CHEBI:189552"/>
    </ligand>
</feature>
<feature type="modified residue" description="N-acetylthreonine" evidence="1">
    <location>
        <position position="15"/>
    </location>
</feature>
<feature type="modified residue" description="Phosphothreonine" evidence="1">
    <location>
        <position position="15"/>
    </location>
</feature>
<evidence type="ECO:0000255" key="1">
    <source>
        <dbReference type="HAMAP-Rule" id="MF_01496"/>
    </source>
</evidence>